<proteinExistence type="evidence at transcript level"/>
<keyword id="KW-0966">Cell projection</keyword>
<keyword id="KW-0539">Nucleus</keyword>
<keyword id="KW-0597">Phosphoprotein</keyword>
<keyword id="KW-1185">Reference proteome</keyword>
<dbReference type="EMBL" id="AF359567">
    <property type="protein sequence ID" value="AAM00243.1"/>
    <property type="molecule type" value="mRNA"/>
</dbReference>
<dbReference type="RefSeq" id="NP_776822.1">
    <property type="nucleotide sequence ID" value="NM_174397.2"/>
</dbReference>
<dbReference type="RefSeq" id="XP_015316475.1">
    <property type="nucleotide sequence ID" value="XM_015460989.1"/>
</dbReference>
<dbReference type="SMR" id="Q8SQ24"/>
<dbReference type="FunCoup" id="Q8SQ24">
    <property type="interactions" value="49"/>
</dbReference>
<dbReference type="STRING" id="9913.ENSBTAP00000051138"/>
<dbReference type="GeneID" id="281939"/>
<dbReference type="KEGG" id="bta:281939"/>
<dbReference type="CTD" id="58529"/>
<dbReference type="VEuPathDB" id="HostDB:ENSBTAG00000033008"/>
<dbReference type="eggNOG" id="ENOG502R4N9">
    <property type="taxonomic scope" value="Eukaryota"/>
</dbReference>
<dbReference type="InParanoid" id="Q8SQ24"/>
<dbReference type="OrthoDB" id="9901707at2759"/>
<dbReference type="Proteomes" id="UP000009136">
    <property type="component" value="Chromosome 28"/>
</dbReference>
<dbReference type="Bgee" id="ENSBTAG00000033008">
    <property type="expression patterns" value="Expressed in biceps femoris and 102 other cell types or tissues"/>
</dbReference>
<dbReference type="GO" id="GO:0015629">
    <property type="term" value="C:actin cytoskeleton"/>
    <property type="evidence" value="ECO:0000318"/>
    <property type="project" value="GO_Central"/>
</dbReference>
<dbReference type="GO" id="GO:0005634">
    <property type="term" value="C:nucleus"/>
    <property type="evidence" value="ECO:0007669"/>
    <property type="project" value="UniProtKB-SubCell"/>
</dbReference>
<dbReference type="GO" id="GO:0031143">
    <property type="term" value="C:pseudopodium"/>
    <property type="evidence" value="ECO:0007669"/>
    <property type="project" value="UniProtKB-SubCell"/>
</dbReference>
<dbReference type="GO" id="GO:0030018">
    <property type="term" value="C:Z disc"/>
    <property type="evidence" value="ECO:0000318"/>
    <property type="project" value="GO_Central"/>
</dbReference>
<dbReference type="GO" id="GO:0003779">
    <property type="term" value="F:actin binding"/>
    <property type="evidence" value="ECO:0000318"/>
    <property type="project" value="GO_Central"/>
</dbReference>
<dbReference type="GO" id="GO:0051373">
    <property type="term" value="F:FATZ binding"/>
    <property type="evidence" value="ECO:0000318"/>
    <property type="project" value="GO_Central"/>
</dbReference>
<dbReference type="GO" id="GO:0031433">
    <property type="term" value="F:telethonin binding"/>
    <property type="evidence" value="ECO:0000318"/>
    <property type="project" value="GO_Central"/>
</dbReference>
<dbReference type="InterPro" id="IPR008438">
    <property type="entry name" value="MYOZ"/>
</dbReference>
<dbReference type="PANTHER" id="PTHR15941">
    <property type="entry name" value="MYOZENIN"/>
    <property type="match status" value="1"/>
</dbReference>
<dbReference type="PANTHER" id="PTHR15941:SF11">
    <property type="entry name" value="MYOZENIN-1"/>
    <property type="match status" value="1"/>
</dbReference>
<dbReference type="Pfam" id="PF05556">
    <property type="entry name" value="Calsarcin"/>
    <property type="match status" value="1"/>
</dbReference>
<reference key="1">
    <citation type="submission" date="2001-03" db="EMBL/GenBank/DDBJ databases">
        <authorList>
            <person name="Takada F."/>
            <person name="Beggs A.H."/>
        </authorList>
    </citation>
    <scope>NUCLEOTIDE SEQUENCE [MRNA]</scope>
</reference>
<gene>
    <name type="primary">MYOZ1</name>
    <name type="synonym">MYOZ</name>
</gene>
<organism>
    <name type="scientific">Bos taurus</name>
    <name type="common">Bovine</name>
    <dbReference type="NCBI Taxonomy" id="9913"/>
    <lineage>
        <taxon>Eukaryota</taxon>
        <taxon>Metazoa</taxon>
        <taxon>Chordata</taxon>
        <taxon>Craniata</taxon>
        <taxon>Vertebrata</taxon>
        <taxon>Euteleostomi</taxon>
        <taxon>Mammalia</taxon>
        <taxon>Eutheria</taxon>
        <taxon>Laurasiatheria</taxon>
        <taxon>Artiodactyla</taxon>
        <taxon>Ruminantia</taxon>
        <taxon>Pecora</taxon>
        <taxon>Bovidae</taxon>
        <taxon>Bovinae</taxon>
        <taxon>Bos</taxon>
    </lineage>
</organism>
<name>MYOZ1_BOVIN</name>
<accession>Q8SQ24</accession>
<comment type="function">
    <text evidence="1">Myozenins may serve as intracellular binding proteins involved in linking Z-disk proteins such as alpha-actinin, gamma-filamin, TCAP/telethonin, LDB3/ZASP and localizing calcineurin signaling to the sarcomere. Plays an important role in the modulation of calcineurin signaling. May play a role in myofibrillogenesis (By similarity).</text>
</comment>
<comment type="subunit">
    <text evidence="1">Interacts with ACTN2, ACTN3, FLNA, FLNB, FLNC, LDB3, PPP3CA and TCAP. Interacts via its C-terminal region with MYOT (By similarity).</text>
</comment>
<comment type="subcellular location">
    <subcellularLocation>
        <location evidence="1">Nucleus</location>
    </subcellularLocation>
    <subcellularLocation>
        <location evidence="1">Cell projection</location>
        <location evidence="1">Pseudopodium</location>
    </subcellularLocation>
    <text evidence="1">Localized to the nucleus and pseudopodia of undifferentiated cells and detected throughout the myotubes of differentiated cells. Colocalizes with ACTN2, FLNC and MYOT at the Z-lines of skeletal muscle (By similarity).</text>
</comment>
<comment type="similarity">
    <text evidence="4">Belongs to the myozenin family.</text>
</comment>
<sequence length="297" mass="31674">MPLSGTPAPNKKRKSSKLIMELTGGGQESSGLNLGKKISVPRDVMLEELSLLTNRGSKMFKLRQLRVEKFIYENHPDVFSDSSMDRFQKFIPTVGGQLGTAGQGFSYSKSSGGGQAGRSGSAGQYGSDQQHHHQGSGSGSGSGSGPGSGGAGGPGGHSGRGGALPDNQAGGEGKHITVFKTYISPWEKAMGIDPQQKVELGIDLLAYGAKAELPKYKSFNRTAMPYGGYEKASKRMTFQMPKFDLGPLLSEPLVLYNQNLSNRPSFNRTPIPWLSSGEPVDYNVDISIPLDGETEEL</sequence>
<feature type="chain" id="PRO_0000111094" description="Myozenin-1">
    <location>
        <begin position="1"/>
        <end position="297"/>
    </location>
</feature>
<feature type="region of interest" description="Disordered" evidence="3">
    <location>
        <begin position="1"/>
        <end position="34"/>
    </location>
</feature>
<feature type="region of interest" description="Disordered" evidence="3">
    <location>
        <begin position="105"/>
        <end position="172"/>
    </location>
</feature>
<feature type="compositionally biased region" description="Low complexity" evidence="3">
    <location>
        <begin position="118"/>
        <end position="128"/>
    </location>
</feature>
<feature type="compositionally biased region" description="Gly residues" evidence="3">
    <location>
        <begin position="136"/>
        <end position="162"/>
    </location>
</feature>
<feature type="modified residue" description="Phosphoserine" evidence="2">
    <location>
        <position position="82"/>
    </location>
</feature>
<protein>
    <recommendedName>
        <fullName>Myozenin-1</fullName>
    </recommendedName>
    <alternativeName>
        <fullName>Calsarcin-2</fullName>
    </alternativeName>
</protein>
<evidence type="ECO:0000250" key="1"/>
<evidence type="ECO:0000250" key="2">
    <source>
        <dbReference type="UniProtKB" id="Q9JK37"/>
    </source>
</evidence>
<evidence type="ECO:0000256" key="3">
    <source>
        <dbReference type="SAM" id="MobiDB-lite"/>
    </source>
</evidence>
<evidence type="ECO:0000305" key="4"/>